<organism>
    <name type="scientific">Rhodopseudomonas palustris (strain BisB5)</name>
    <dbReference type="NCBI Taxonomy" id="316057"/>
    <lineage>
        <taxon>Bacteria</taxon>
        <taxon>Pseudomonadati</taxon>
        <taxon>Pseudomonadota</taxon>
        <taxon>Alphaproteobacteria</taxon>
        <taxon>Hyphomicrobiales</taxon>
        <taxon>Nitrobacteraceae</taxon>
        <taxon>Rhodopseudomonas</taxon>
    </lineage>
</organism>
<gene>
    <name evidence="1" type="primary">dapE</name>
    <name type="ordered locus">RPD_0077</name>
</gene>
<dbReference type="EC" id="3.5.1.18" evidence="1"/>
<dbReference type="EMBL" id="CP000283">
    <property type="protein sequence ID" value="ABE37317.1"/>
    <property type="molecule type" value="Genomic_DNA"/>
</dbReference>
<dbReference type="SMR" id="Q13F22"/>
<dbReference type="STRING" id="316057.RPD_0077"/>
<dbReference type="KEGG" id="rpd:RPD_0077"/>
<dbReference type="eggNOG" id="COG0624">
    <property type="taxonomic scope" value="Bacteria"/>
</dbReference>
<dbReference type="HOGENOM" id="CLU_021802_4_0_5"/>
<dbReference type="BioCyc" id="RPAL316057:RPD_RS00385-MONOMER"/>
<dbReference type="UniPathway" id="UPA00034">
    <property type="reaction ID" value="UER00021"/>
</dbReference>
<dbReference type="Proteomes" id="UP000001818">
    <property type="component" value="Chromosome"/>
</dbReference>
<dbReference type="GO" id="GO:0008777">
    <property type="term" value="F:acetylornithine deacetylase activity"/>
    <property type="evidence" value="ECO:0007669"/>
    <property type="project" value="TreeGrafter"/>
</dbReference>
<dbReference type="GO" id="GO:0050897">
    <property type="term" value="F:cobalt ion binding"/>
    <property type="evidence" value="ECO:0007669"/>
    <property type="project" value="UniProtKB-UniRule"/>
</dbReference>
<dbReference type="GO" id="GO:0009014">
    <property type="term" value="F:succinyl-diaminopimelate desuccinylase activity"/>
    <property type="evidence" value="ECO:0007669"/>
    <property type="project" value="UniProtKB-UniRule"/>
</dbReference>
<dbReference type="GO" id="GO:0008270">
    <property type="term" value="F:zinc ion binding"/>
    <property type="evidence" value="ECO:0007669"/>
    <property type="project" value="UniProtKB-UniRule"/>
</dbReference>
<dbReference type="GO" id="GO:0019877">
    <property type="term" value="P:diaminopimelate biosynthetic process"/>
    <property type="evidence" value="ECO:0007669"/>
    <property type="project" value="UniProtKB-UniRule"/>
</dbReference>
<dbReference type="GO" id="GO:0006526">
    <property type="term" value="P:L-arginine biosynthetic process"/>
    <property type="evidence" value="ECO:0007669"/>
    <property type="project" value="TreeGrafter"/>
</dbReference>
<dbReference type="GO" id="GO:0009089">
    <property type="term" value="P:lysine biosynthetic process via diaminopimelate"/>
    <property type="evidence" value="ECO:0007669"/>
    <property type="project" value="UniProtKB-UniRule"/>
</dbReference>
<dbReference type="CDD" id="cd03891">
    <property type="entry name" value="M20_DapE_proteobac"/>
    <property type="match status" value="1"/>
</dbReference>
<dbReference type="Gene3D" id="3.40.630.10">
    <property type="entry name" value="Zn peptidases"/>
    <property type="match status" value="2"/>
</dbReference>
<dbReference type="HAMAP" id="MF_01690">
    <property type="entry name" value="DapE"/>
    <property type="match status" value="1"/>
</dbReference>
<dbReference type="InterPro" id="IPR036264">
    <property type="entry name" value="Bact_exopeptidase_dim_dom"/>
</dbReference>
<dbReference type="InterPro" id="IPR005941">
    <property type="entry name" value="DapE_proteobac"/>
</dbReference>
<dbReference type="InterPro" id="IPR002933">
    <property type="entry name" value="Peptidase_M20"/>
</dbReference>
<dbReference type="InterPro" id="IPR011650">
    <property type="entry name" value="Peptidase_M20_dimer"/>
</dbReference>
<dbReference type="InterPro" id="IPR050072">
    <property type="entry name" value="Peptidase_M20A"/>
</dbReference>
<dbReference type="NCBIfam" id="TIGR01246">
    <property type="entry name" value="dapE_proteo"/>
    <property type="match status" value="1"/>
</dbReference>
<dbReference type="NCBIfam" id="NF009557">
    <property type="entry name" value="PRK13009.1"/>
    <property type="match status" value="1"/>
</dbReference>
<dbReference type="PANTHER" id="PTHR43808">
    <property type="entry name" value="ACETYLORNITHINE DEACETYLASE"/>
    <property type="match status" value="1"/>
</dbReference>
<dbReference type="PANTHER" id="PTHR43808:SF31">
    <property type="entry name" value="N-ACETYL-L-CITRULLINE DEACETYLASE"/>
    <property type="match status" value="1"/>
</dbReference>
<dbReference type="Pfam" id="PF07687">
    <property type="entry name" value="M20_dimer"/>
    <property type="match status" value="1"/>
</dbReference>
<dbReference type="Pfam" id="PF01546">
    <property type="entry name" value="Peptidase_M20"/>
    <property type="match status" value="1"/>
</dbReference>
<dbReference type="SUPFAM" id="SSF55031">
    <property type="entry name" value="Bacterial exopeptidase dimerisation domain"/>
    <property type="match status" value="1"/>
</dbReference>
<dbReference type="SUPFAM" id="SSF53187">
    <property type="entry name" value="Zn-dependent exopeptidases"/>
    <property type="match status" value="1"/>
</dbReference>
<protein>
    <recommendedName>
        <fullName evidence="1">Succinyl-diaminopimelate desuccinylase</fullName>
        <shortName evidence="1">SDAP desuccinylase</shortName>
        <ecNumber evidence="1">3.5.1.18</ecNumber>
    </recommendedName>
    <alternativeName>
        <fullName evidence="1">N-succinyl-LL-2,6-diaminoheptanedioate amidohydrolase</fullName>
    </alternativeName>
</protein>
<name>DAPE_RHOPS</name>
<reference key="1">
    <citation type="submission" date="2006-03" db="EMBL/GenBank/DDBJ databases">
        <title>Complete sequence of Rhodopseudomonas palustris BisB5.</title>
        <authorList>
            <consortium name="US DOE Joint Genome Institute"/>
            <person name="Copeland A."/>
            <person name="Lucas S."/>
            <person name="Lapidus A."/>
            <person name="Barry K."/>
            <person name="Detter J.C."/>
            <person name="Glavina del Rio T."/>
            <person name="Hammon N."/>
            <person name="Israni S."/>
            <person name="Dalin E."/>
            <person name="Tice H."/>
            <person name="Pitluck S."/>
            <person name="Chain P."/>
            <person name="Malfatti S."/>
            <person name="Shin M."/>
            <person name="Vergez L."/>
            <person name="Schmutz J."/>
            <person name="Larimer F."/>
            <person name="Land M."/>
            <person name="Hauser L."/>
            <person name="Pelletier D.A."/>
            <person name="Kyrpides N."/>
            <person name="Lykidis A."/>
            <person name="Oda Y."/>
            <person name="Harwood C.S."/>
            <person name="Richardson P."/>
        </authorList>
    </citation>
    <scope>NUCLEOTIDE SEQUENCE [LARGE SCALE GENOMIC DNA]</scope>
    <source>
        <strain>BisB5</strain>
    </source>
</reference>
<comment type="function">
    <text evidence="1">Catalyzes the hydrolysis of N-succinyl-L,L-diaminopimelic acid (SDAP), forming succinate and LL-2,6-diaminopimelate (DAP), an intermediate involved in the bacterial biosynthesis of lysine and meso-diaminopimelic acid, an essential component of bacterial cell walls.</text>
</comment>
<comment type="catalytic activity">
    <reaction evidence="1">
        <text>N-succinyl-(2S,6S)-2,6-diaminopimelate + H2O = (2S,6S)-2,6-diaminopimelate + succinate</text>
        <dbReference type="Rhea" id="RHEA:22608"/>
        <dbReference type="ChEBI" id="CHEBI:15377"/>
        <dbReference type="ChEBI" id="CHEBI:30031"/>
        <dbReference type="ChEBI" id="CHEBI:57609"/>
        <dbReference type="ChEBI" id="CHEBI:58087"/>
        <dbReference type="EC" id="3.5.1.18"/>
    </reaction>
</comment>
<comment type="cofactor">
    <cofactor evidence="1">
        <name>Zn(2+)</name>
        <dbReference type="ChEBI" id="CHEBI:29105"/>
    </cofactor>
    <cofactor evidence="1">
        <name>Co(2+)</name>
        <dbReference type="ChEBI" id="CHEBI:48828"/>
    </cofactor>
    <text evidence="1">Binds 2 Zn(2+) or Co(2+) ions per subunit.</text>
</comment>
<comment type="pathway">
    <text evidence="1">Amino-acid biosynthesis; L-lysine biosynthesis via DAP pathway; LL-2,6-diaminopimelate from (S)-tetrahydrodipicolinate (succinylase route): step 3/3.</text>
</comment>
<comment type="subunit">
    <text evidence="1">Homodimer.</text>
</comment>
<comment type="similarity">
    <text evidence="1">Belongs to the peptidase M20A family. DapE subfamily.</text>
</comment>
<proteinExistence type="inferred from homology"/>
<feature type="chain" id="PRO_0000375692" description="Succinyl-diaminopimelate desuccinylase">
    <location>
        <begin position="1"/>
        <end position="388"/>
    </location>
</feature>
<feature type="active site" evidence="1">
    <location>
        <position position="76"/>
    </location>
</feature>
<feature type="active site" description="Proton acceptor" evidence="1">
    <location>
        <position position="142"/>
    </location>
</feature>
<feature type="binding site" evidence="1">
    <location>
        <position position="74"/>
    </location>
    <ligand>
        <name>Zn(2+)</name>
        <dbReference type="ChEBI" id="CHEBI:29105"/>
        <label>1</label>
    </ligand>
</feature>
<feature type="binding site" evidence="1">
    <location>
        <position position="107"/>
    </location>
    <ligand>
        <name>Zn(2+)</name>
        <dbReference type="ChEBI" id="CHEBI:29105"/>
        <label>1</label>
    </ligand>
</feature>
<feature type="binding site" evidence="1">
    <location>
        <position position="107"/>
    </location>
    <ligand>
        <name>Zn(2+)</name>
        <dbReference type="ChEBI" id="CHEBI:29105"/>
        <label>2</label>
    </ligand>
</feature>
<feature type="binding site" evidence="1">
    <location>
        <position position="143"/>
    </location>
    <ligand>
        <name>Zn(2+)</name>
        <dbReference type="ChEBI" id="CHEBI:29105"/>
        <label>2</label>
    </ligand>
</feature>
<feature type="binding site" evidence="1">
    <location>
        <position position="171"/>
    </location>
    <ligand>
        <name>Zn(2+)</name>
        <dbReference type="ChEBI" id="CHEBI:29105"/>
        <label>1</label>
    </ligand>
</feature>
<feature type="binding site" evidence="1">
    <location>
        <position position="360"/>
    </location>
    <ligand>
        <name>Zn(2+)</name>
        <dbReference type="ChEBI" id="CHEBI:29105"/>
        <label>2</label>
    </ligand>
</feature>
<accession>Q13F22</accession>
<sequence>MTSSRDALSIAQALLRCPSVTPADAGALGVLETLLKDAGFTAHRVTFSEPGAADIDNLYARIGDGAPHLCFAGHTDVVPPGDADAWSHGAFSGDVEGGLLYGRGAVDMKGGIACAVAAVLDHLAAHGGRPKGSISFLITGDEEDVAVNGTVKLLQWAADRGETFDHCIVGEPSNVEAIGDTIKIGRRGSQSGMLIVDGLQGHVAYPHRASNPIPDIAALITALNDEPLDQGSAQFQPSNLEFTSVDVGNPATNVIPAQARAKFNIRFNDHHTQDSLKALIEQRLAAACGNRIRARIEWLPSNADVFVTKPGNFTDLVTASIADVTGRTPDLNTGGGTSDARFIAKYCPVVEFGLVGQTMHQIDERTPVADLDQLTAIYRGVLERYFKS</sequence>
<keyword id="KW-0028">Amino-acid biosynthesis</keyword>
<keyword id="KW-0170">Cobalt</keyword>
<keyword id="KW-0220">Diaminopimelate biosynthesis</keyword>
<keyword id="KW-0378">Hydrolase</keyword>
<keyword id="KW-0457">Lysine biosynthesis</keyword>
<keyword id="KW-0479">Metal-binding</keyword>
<keyword id="KW-0862">Zinc</keyword>
<evidence type="ECO:0000255" key="1">
    <source>
        <dbReference type="HAMAP-Rule" id="MF_01690"/>
    </source>
</evidence>